<dbReference type="EC" id="4.2.2.n1"/>
<dbReference type="EMBL" id="U18785">
    <property type="protein sequence ID" value="AAB60060.1"/>
    <property type="molecule type" value="Genomic_DNA"/>
</dbReference>
<dbReference type="EMBL" id="U00096">
    <property type="protein sequence ID" value="AAC75743.1"/>
    <property type="molecule type" value="Genomic_DNA"/>
</dbReference>
<dbReference type="EMBL" id="AP009048">
    <property type="protein sequence ID" value="BAA16563.1"/>
    <property type="molecule type" value="Genomic_DNA"/>
</dbReference>
<dbReference type="EMBL" id="J02708">
    <property type="status" value="NOT_ANNOTATED_CDS"/>
    <property type="molecule type" value="Genomic_DNA"/>
</dbReference>
<dbReference type="PIR" id="A65050">
    <property type="entry name" value="A65050"/>
</dbReference>
<dbReference type="RefSeq" id="NP_417181.1">
    <property type="nucleotide sequence ID" value="NC_000913.3"/>
</dbReference>
<dbReference type="RefSeq" id="WP_001295177.1">
    <property type="nucleotide sequence ID" value="NZ_LN832404.1"/>
</dbReference>
<dbReference type="PDB" id="1D0K">
    <property type="method" value="X-ray"/>
    <property type="resolution" value="2.02 A"/>
    <property type="chains" value="A=40-361"/>
</dbReference>
<dbReference type="PDB" id="1D0L">
    <property type="method" value="X-ray"/>
    <property type="resolution" value="1.97 A"/>
    <property type="chains" value="A=40-361"/>
</dbReference>
<dbReference type="PDB" id="1D0M">
    <property type="method" value="X-ray"/>
    <property type="resolution" value="2.47 A"/>
    <property type="chains" value="A=40-361"/>
</dbReference>
<dbReference type="PDB" id="1LTM">
    <property type="method" value="X-ray"/>
    <property type="resolution" value="1.70 A"/>
    <property type="chains" value="A=42-361"/>
</dbReference>
<dbReference type="PDB" id="1QDR">
    <property type="method" value="X-ray"/>
    <property type="resolution" value="2.10 A"/>
    <property type="chains" value="A=40-361"/>
</dbReference>
<dbReference type="PDB" id="1QDT">
    <property type="method" value="X-ray"/>
    <property type="resolution" value="2.10 A"/>
    <property type="chains" value="A=40-361"/>
</dbReference>
<dbReference type="PDB" id="1QUS">
    <property type="method" value="X-ray"/>
    <property type="resolution" value="1.70 A"/>
    <property type="chains" value="A=40-361"/>
</dbReference>
<dbReference type="PDB" id="1QUT">
    <property type="method" value="X-ray"/>
    <property type="resolution" value="2.44 A"/>
    <property type="chains" value="A=40-361"/>
</dbReference>
<dbReference type="PDBsum" id="1D0K"/>
<dbReference type="PDBsum" id="1D0L"/>
<dbReference type="PDBsum" id="1D0M"/>
<dbReference type="PDBsum" id="1LTM"/>
<dbReference type="PDBsum" id="1QDR"/>
<dbReference type="PDBsum" id="1QDT"/>
<dbReference type="PDBsum" id="1QUS"/>
<dbReference type="PDBsum" id="1QUT"/>
<dbReference type="SMR" id="P41052"/>
<dbReference type="BioGRID" id="4262079">
    <property type="interactions" value="390"/>
</dbReference>
<dbReference type="BioGRID" id="851516">
    <property type="interactions" value="9"/>
</dbReference>
<dbReference type="DIP" id="DIP-10221N"/>
<dbReference type="FunCoup" id="P41052">
    <property type="interactions" value="169"/>
</dbReference>
<dbReference type="IntAct" id="P41052">
    <property type="interactions" value="10"/>
</dbReference>
<dbReference type="STRING" id="511145.b2701"/>
<dbReference type="BindingDB" id="P41052"/>
<dbReference type="ChEMBL" id="CHEMBL2046262"/>
<dbReference type="DrugBank" id="DB02595">
    <property type="generic name" value="(2R,3S,5S)-2-(Hydroxymethyl)-5-[(2-sulfoethyl)carbamoyl]-3-pyrrolidiniumyl 2-acetamido-2-deoxy-4-O-sulfo-beta-D-glucopyranoside"/>
</dbReference>
<dbReference type="DrugBank" id="DB03709">
    <property type="generic name" value="Bicine"/>
</dbReference>
<dbReference type="CAZy" id="GH103">
    <property type="family name" value="Glycoside Hydrolase Family 103"/>
</dbReference>
<dbReference type="jPOST" id="P41052"/>
<dbReference type="PaxDb" id="511145-b2701"/>
<dbReference type="EnsemblBacteria" id="AAC75743">
    <property type="protein sequence ID" value="AAC75743"/>
    <property type="gene ID" value="b2701"/>
</dbReference>
<dbReference type="GeneID" id="75172783"/>
<dbReference type="GeneID" id="947184"/>
<dbReference type="KEGG" id="ecj:JW2671"/>
<dbReference type="KEGG" id="eco:b2701"/>
<dbReference type="KEGG" id="ecoc:C3026_14870"/>
<dbReference type="PATRIC" id="fig|511145.12.peg.2792"/>
<dbReference type="EchoBASE" id="EB2561"/>
<dbReference type="eggNOG" id="COG2951">
    <property type="taxonomic scope" value="Bacteria"/>
</dbReference>
<dbReference type="HOGENOM" id="CLU_035402_1_0_6"/>
<dbReference type="InParanoid" id="P41052"/>
<dbReference type="OMA" id="IYGRYMG"/>
<dbReference type="OrthoDB" id="9772911at2"/>
<dbReference type="PhylomeDB" id="P41052"/>
<dbReference type="BioCyc" id="EcoCyc:G7410-MONOMER"/>
<dbReference type="BioCyc" id="MetaCyc:G7410-MONOMER"/>
<dbReference type="EvolutionaryTrace" id="P41052"/>
<dbReference type="PRO" id="PR:P41052"/>
<dbReference type="Proteomes" id="UP000000625">
    <property type="component" value="Chromosome"/>
</dbReference>
<dbReference type="GO" id="GO:0009279">
    <property type="term" value="C:cell outer membrane"/>
    <property type="evidence" value="ECO:0000314"/>
    <property type="project" value="EcoCyc"/>
</dbReference>
<dbReference type="GO" id="GO:0030288">
    <property type="term" value="C:outer membrane-bounded periplasmic space"/>
    <property type="evidence" value="ECO:0000304"/>
    <property type="project" value="EcoCyc"/>
</dbReference>
<dbReference type="GO" id="GO:0005509">
    <property type="term" value="F:calcium ion binding"/>
    <property type="evidence" value="ECO:0000314"/>
    <property type="project" value="EcoCyc"/>
</dbReference>
<dbReference type="GO" id="GO:0008932">
    <property type="term" value="F:lytic endotransglycosylase activity"/>
    <property type="evidence" value="ECO:0000314"/>
    <property type="project" value="EcoCyc"/>
</dbReference>
<dbReference type="GO" id="GO:0008933">
    <property type="term" value="F:peptidoglycan lytic transglycosylase activity"/>
    <property type="evidence" value="ECO:0000314"/>
    <property type="project" value="EcoCyc"/>
</dbReference>
<dbReference type="GO" id="GO:0031402">
    <property type="term" value="F:sodium ion binding"/>
    <property type="evidence" value="ECO:0000314"/>
    <property type="project" value="EcoCyc"/>
</dbReference>
<dbReference type="GO" id="GO:0071555">
    <property type="term" value="P:cell wall organization"/>
    <property type="evidence" value="ECO:0007669"/>
    <property type="project" value="UniProtKB-KW"/>
</dbReference>
<dbReference type="GO" id="GO:0009253">
    <property type="term" value="P:peptidoglycan catabolic process"/>
    <property type="evidence" value="ECO:0000314"/>
    <property type="project" value="EcoCyc"/>
</dbReference>
<dbReference type="CDD" id="cd13399">
    <property type="entry name" value="Slt35-like"/>
    <property type="match status" value="1"/>
</dbReference>
<dbReference type="FunFam" id="1.10.8.350:FF:000001">
    <property type="entry name" value="Lytic murein transglycosylase B"/>
    <property type="match status" value="1"/>
</dbReference>
<dbReference type="Gene3D" id="1.10.530.10">
    <property type="match status" value="1"/>
</dbReference>
<dbReference type="Gene3D" id="1.10.8.350">
    <property type="entry name" value="Bacterial muramidase"/>
    <property type="match status" value="1"/>
</dbReference>
<dbReference type="InterPro" id="IPR023346">
    <property type="entry name" value="Lysozyme-like_dom_sf"/>
</dbReference>
<dbReference type="InterPro" id="IPR011757">
    <property type="entry name" value="Lytic_transglycosylase_MltB"/>
</dbReference>
<dbReference type="InterPro" id="IPR043426">
    <property type="entry name" value="MltB-like"/>
</dbReference>
<dbReference type="InterPro" id="IPR031304">
    <property type="entry name" value="SLT_2"/>
</dbReference>
<dbReference type="NCBIfam" id="TIGR02282">
    <property type="entry name" value="MltB"/>
    <property type="match status" value="1"/>
</dbReference>
<dbReference type="NCBIfam" id="NF008029">
    <property type="entry name" value="PRK10760.1"/>
    <property type="match status" value="1"/>
</dbReference>
<dbReference type="PANTHER" id="PTHR30163">
    <property type="entry name" value="MEMBRANE-BOUND LYTIC MUREIN TRANSGLYCOSYLASE B"/>
    <property type="match status" value="1"/>
</dbReference>
<dbReference type="PANTHER" id="PTHR30163:SF9">
    <property type="entry name" value="MEMBRANE-BOUND LYTIC MUREIN TRANSGLYCOSYLASE B"/>
    <property type="match status" value="1"/>
</dbReference>
<dbReference type="Pfam" id="PF13406">
    <property type="entry name" value="SLT_2"/>
    <property type="match status" value="1"/>
</dbReference>
<dbReference type="SUPFAM" id="SSF53955">
    <property type="entry name" value="Lysozyme-like"/>
    <property type="match status" value="1"/>
</dbReference>
<dbReference type="PROSITE" id="PS51257">
    <property type="entry name" value="PROKAR_LIPOPROTEIN"/>
    <property type="match status" value="1"/>
</dbReference>
<sequence>MFKRRYVTLLPLFVLLAACSSKPKPTETDTTTGTPSGGFLLEPQHNVMQMGGDFANNPNAQQFIDKMVNKHGFDRQQLQEILSQAKRLDSVLRLMDNQAPTTSVKPPSGPNGAWLRYRKKFITPDNVQNGVVFWNQYEDALNRAWQVYGVPPEIIVGIIGVETRWGRVMGKTRILDALATLSFNYPRRAEYFSGELETFLLMARDEQDDPLNLKGSFAGAMGYGQFMPSSYKQYAVDFSGDGHINLWDPVDAIGSVANYFKAHGWVKGDQVAVMANGQAPGLPNGFKTKYSISQLAAAGLTPQQPLGNHQQASLLRLDVGTGYQYWYGLPNFYTITRYNHSTHYAMAVWQLGQAVALARVQ</sequence>
<name>MLTB_ECOLI</name>
<proteinExistence type="evidence at protein level"/>
<evidence type="ECO:0000305" key="1"/>
<evidence type="ECO:0007829" key="2">
    <source>
        <dbReference type="PDB" id="1D0L"/>
    </source>
</evidence>
<evidence type="ECO:0007829" key="3">
    <source>
        <dbReference type="PDB" id="1D0M"/>
    </source>
</evidence>
<evidence type="ECO:0007829" key="4">
    <source>
        <dbReference type="PDB" id="1LTM"/>
    </source>
</evidence>
<gene>
    <name type="primary">mltB</name>
    <name type="ordered locus">b2701</name>
    <name type="ordered locus">JW2671</name>
</gene>
<protein>
    <recommendedName>
        <fullName>Membrane-bound lytic murein transglycosylase B</fullName>
        <ecNumber>4.2.2.n1</ecNumber>
    </recommendedName>
    <alternativeName>
        <fullName>35 kDa soluble lytic transglycosylase</fullName>
    </alternativeName>
    <alternativeName>
        <fullName>Murein hydrolase B</fullName>
    </alternativeName>
    <alternativeName>
        <fullName>Slt35</fullName>
    </alternativeName>
</protein>
<accession>P41052</accession>
<feature type="signal peptide" evidence="1">
    <location>
        <begin position="1"/>
        <end position="18"/>
    </location>
</feature>
<feature type="chain" id="PRO_0000032784" description="Membrane-bound lytic murein transglycosylase B">
    <location>
        <begin position="19"/>
        <end position="361"/>
    </location>
</feature>
<feature type="active site">
    <location>
        <position position="162"/>
    </location>
</feature>
<feature type="lipid moiety-binding region" description="N-palmitoyl cysteine" evidence="1">
    <location>
        <position position="19"/>
    </location>
</feature>
<feature type="lipid moiety-binding region" description="S-diacylglycerol cysteine" evidence="1">
    <location>
        <position position="19"/>
    </location>
</feature>
<feature type="turn" evidence="4">
    <location>
        <begin position="53"/>
        <end position="56"/>
    </location>
</feature>
<feature type="helix" evidence="4">
    <location>
        <begin position="58"/>
        <end position="71"/>
    </location>
</feature>
<feature type="helix" evidence="4">
    <location>
        <begin position="75"/>
        <end position="82"/>
    </location>
</feature>
<feature type="helix" evidence="4">
    <location>
        <begin position="89"/>
        <end position="95"/>
    </location>
</feature>
<feature type="helix" evidence="4">
    <location>
        <begin position="113"/>
        <end position="118"/>
    </location>
</feature>
<feature type="turn" evidence="4">
    <location>
        <begin position="119"/>
        <end position="121"/>
    </location>
</feature>
<feature type="helix" evidence="4">
    <location>
        <begin position="124"/>
        <end position="136"/>
    </location>
</feature>
<feature type="helix" evidence="4">
    <location>
        <begin position="138"/>
        <end position="148"/>
    </location>
</feature>
<feature type="helix" evidence="4">
    <location>
        <begin position="152"/>
        <end position="163"/>
    </location>
</feature>
<feature type="turn" evidence="4">
    <location>
        <begin position="164"/>
        <end position="167"/>
    </location>
</feature>
<feature type="strand" evidence="3">
    <location>
        <begin position="171"/>
        <end position="173"/>
    </location>
</feature>
<feature type="helix" evidence="4">
    <location>
        <begin position="174"/>
        <end position="183"/>
    </location>
</feature>
<feature type="helix" evidence="4">
    <location>
        <begin position="186"/>
        <end position="188"/>
    </location>
</feature>
<feature type="helix" evidence="4">
    <location>
        <begin position="189"/>
        <end position="205"/>
    </location>
</feature>
<feature type="turn" evidence="4">
    <location>
        <begin position="210"/>
        <end position="212"/>
    </location>
</feature>
<feature type="turn" evidence="4">
    <location>
        <begin position="222"/>
        <end position="225"/>
    </location>
</feature>
<feature type="helix" evidence="4">
    <location>
        <begin position="228"/>
        <end position="234"/>
    </location>
</feature>
<feature type="strand" evidence="4">
    <location>
        <begin position="239"/>
        <end position="242"/>
    </location>
</feature>
<feature type="helix" evidence="4">
    <location>
        <begin position="249"/>
        <end position="262"/>
    </location>
</feature>
<feature type="strand" evidence="4">
    <location>
        <begin position="271"/>
        <end position="277"/>
    </location>
</feature>
<feature type="strand" evidence="2">
    <location>
        <begin position="280"/>
        <end position="282"/>
    </location>
</feature>
<feature type="strand" evidence="4">
    <location>
        <begin position="285"/>
        <end position="291"/>
    </location>
</feature>
<feature type="helix" evidence="4">
    <location>
        <begin position="292"/>
        <end position="297"/>
    </location>
</feature>
<feature type="strand" evidence="4">
    <location>
        <begin position="301"/>
        <end position="304"/>
    </location>
</feature>
<feature type="strand" evidence="4">
    <location>
        <begin position="311"/>
        <end position="318"/>
    </location>
</feature>
<feature type="strand" evidence="4">
    <location>
        <begin position="320"/>
        <end position="328"/>
    </location>
</feature>
<feature type="helix" evidence="4">
    <location>
        <begin position="330"/>
        <end position="336"/>
    </location>
</feature>
<feature type="helix" evidence="4">
    <location>
        <begin position="342"/>
        <end position="360"/>
    </location>
</feature>
<organism>
    <name type="scientific">Escherichia coli (strain K12)</name>
    <dbReference type="NCBI Taxonomy" id="83333"/>
    <lineage>
        <taxon>Bacteria</taxon>
        <taxon>Pseudomonadati</taxon>
        <taxon>Pseudomonadota</taxon>
        <taxon>Gammaproteobacteria</taxon>
        <taxon>Enterobacterales</taxon>
        <taxon>Enterobacteriaceae</taxon>
        <taxon>Escherichia</taxon>
    </lineage>
</organism>
<keyword id="KW-0002">3D-structure</keyword>
<keyword id="KW-0998">Cell outer membrane</keyword>
<keyword id="KW-0961">Cell wall biogenesis/degradation</keyword>
<keyword id="KW-0449">Lipoprotein</keyword>
<keyword id="KW-0456">Lyase</keyword>
<keyword id="KW-0472">Membrane</keyword>
<keyword id="KW-0564">Palmitate</keyword>
<keyword id="KW-1185">Reference proteome</keyword>
<keyword id="KW-0732">Signal</keyword>
<comment type="function">
    <text>Murein-degrading enzyme. Catalyzes the cleavage of the glycosidic bonds between N-acetylmuramic acid and N-acetylglucosamine residues in peptidoglycan. May play a role in recycling of muropeptides during cell elongation and/or cell division.</text>
</comment>
<comment type="catalytic activity">
    <reaction>
        <text>Exolytic cleavage of the (1-&gt;4)-beta-glycosidic linkage between N-acetylmuramic acid (MurNAc) and N-acetylglucosamine (GlcNAc) residues in peptidoglycan, from either the reducing or the non-reducing ends of the peptidoglycan chains, with concomitant formation of a 1,6-anhydrobond in the MurNAc residue.</text>
        <dbReference type="EC" id="4.2.2.n1"/>
    </reaction>
</comment>
<comment type="subunit">
    <text>Monomer.</text>
</comment>
<comment type="subcellular location">
    <subcellularLocation>
        <location>Cell outer membrane</location>
        <topology>Lipid-anchor</topology>
        <orientation>Periplasmic side</orientation>
    </subcellularLocation>
</comment>
<reference key="1">
    <citation type="journal article" date="1995" name="Mol. Microbiol.">
        <title>Cloning and expression of a murein hydrolase lipoprotein from Escherichia coli.</title>
        <authorList>
            <person name="Ehlert K."/>
            <person name="Hoeltje J.-V."/>
            <person name="Templin M.F."/>
        </authorList>
    </citation>
    <scope>NUCLEOTIDE SEQUENCE [GENOMIC DNA]</scope>
    <source>
        <strain>K12</strain>
    </source>
</reference>
<reference key="2">
    <citation type="journal article" date="1995" name="FEBS Lett.">
        <title>Cloning and controlled overexpression of the gene encoding the 35 kDa soluble lytic transglycosylase from Escherichia coli.</title>
        <authorList>
            <person name="Dijkstra A.J."/>
            <person name="Hermann F."/>
            <person name="Keck W."/>
        </authorList>
    </citation>
    <scope>NUCLEOTIDE SEQUENCE [GENOMIC DNA]</scope>
</reference>
<reference key="3">
    <citation type="journal article" date="1997" name="DNA Res.">
        <title>Construction of a contiguous 874-kb sequence of the Escherichia coli-K12 genome corresponding to 50.0-68.8 min on the linkage map and analysis of its sequence features.</title>
        <authorList>
            <person name="Yamamoto Y."/>
            <person name="Aiba H."/>
            <person name="Baba T."/>
            <person name="Hayashi K."/>
            <person name="Inada T."/>
            <person name="Isono K."/>
            <person name="Itoh T."/>
            <person name="Kimura S."/>
            <person name="Kitagawa M."/>
            <person name="Makino K."/>
            <person name="Miki T."/>
            <person name="Mitsuhashi N."/>
            <person name="Mizobuchi K."/>
            <person name="Mori H."/>
            <person name="Nakade S."/>
            <person name="Nakamura Y."/>
            <person name="Nashimoto H."/>
            <person name="Oshima T."/>
            <person name="Oyama S."/>
            <person name="Saito N."/>
            <person name="Sampei G."/>
            <person name="Satoh Y."/>
            <person name="Sivasundaram S."/>
            <person name="Tagami H."/>
            <person name="Takahashi H."/>
            <person name="Takeda J."/>
            <person name="Takemoto K."/>
            <person name="Uehara K."/>
            <person name="Wada C."/>
            <person name="Yamagata S."/>
            <person name="Horiuchi T."/>
        </authorList>
    </citation>
    <scope>NUCLEOTIDE SEQUENCE [LARGE SCALE GENOMIC DNA]</scope>
    <source>
        <strain>K12 / W3110 / ATCC 27325 / DSM 5911</strain>
    </source>
</reference>
<reference key="4">
    <citation type="journal article" date="1997" name="Science">
        <title>The complete genome sequence of Escherichia coli K-12.</title>
        <authorList>
            <person name="Blattner F.R."/>
            <person name="Plunkett G. III"/>
            <person name="Bloch C.A."/>
            <person name="Perna N.T."/>
            <person name="Burland V."/>
            <person name="Riley M."/>
            <person name="Collado-Vides J."/>
            <person name="Glasner J.D."/>
            <person name="Rode C.K."/>
            <person name="Mayhew G.F."/>
            <person name="Gregor J."/>
            <person name="Davis N.W."/>
            <person name="Kirkpatrick H.A."/>
            <person name="Goeden M.A."/>
            <person name="Rose D.J."/>
            <person name="Mau B."/>
            <person name="Shao Y."/>
        </authorList>
    </citation>
    <scope>NUCLEOTIDE SEQUENCE [LARGE SCALE GENOMIC DNA]</scope>
    <source>
        <strain>K12 / MG1655 / ATCC 47076</strain>
    </source>
</reference>
<reference key="5">
    <citation type="journal article" date="2006" name="Mol. Syst. Biol.">
        <title>Highly accurate genome sequences of Escherichia coli K-12 strains MG1655 and W3110.</title>
        <authorList>
            <person name="Hayashi K."/>
            <person name="Morooka N."/>
            <person name="Yamamoto Y."/>
            <person name="Fujita K."/>
            <person name="Isono K."/>
            <person name="Choi S."/>
            <person name="Ohtsubo E."/>
            <person name="Baba T."/>
            <person name="Wanner B.L."/>
            <person name="Mori H."/>
            <person name="Horiuchi T."/>
        </authorList>
    </citation>
    <scope>NUCLEOTIDE SEQUENCE [LARGE SCALE GENOMIC DNA]</scope>
    <source>
        <strain>K12 / W3110 / ATCC 27325 / DSM 5911</strain>
    </source>
</reference>
<reference key="6">
    <citation type="journal article" date="1987" name="J. Biol. Chem.">
        <title>Glucitol-specific enzymes of the phosphotransferase system in Escherichia coli. Nucleotide sequence of the gut operon.</title>
        <authorList>
            <person name="Yamada M."/>
            <person name="Saier M.H. Jr."/>
        </authorList>
    </citation>
    <scope>PRELIMINARY NUCLEOTIDE SEQUENCE [GENOMIC DNA] OF 1-91</scope>
</reference>
<reference key="7">
    <citation type="journal article" date="1998" name="Acta Crystallogr. D">
        <title>Accelerated X-ray structure elucidation of a 36 kDa muramidase/transglycosylase using wARP.</title>
        <authorList>
            <person name="van Asselt E.J."/>
            <person name="Perrakis A."/>
            <person name="Kalk K.H."/>
            <person name="Lamzin V.S."/>
            <person name="Dijkstra B.W."/>
        </authorList>
    </citation>
    <scope>X-RAY CRYSTALLOGRAPHY (1.7 ANGSTROMS) OF 42-361</scope>
</reference>
<reference key="8">
    <citation type="journal article" date="1999" name="FEBS Lett.">
        <title>Binding of calcium in the EF-hand of Escherichia coli lytic transglycosylase Slt35 is important for stability.</title>
        <authorList>
            <person name="van Asselt E.J."/>
            <person name="Dijkstra B.W."/>
        </authorList>
    </citation>
    <scope>X-RAY CRYSTALLOGRAPHY (2.1 ANGSTROMS) OF 40-361</scope>
</reference>
<reference key="9">
    <citation type="journal article" date="1999" name="Structure">
        <title>Crystal structure of Escherichia coli lytic transglycosylase Slt35 reveals a lysozyme-like catalytic domain with an EF-hand.</title>
        <authorList>
            <person name="van Asselt E.J."/>
            <person name="Dijkstra A.J."/>
            <person name="Kalk K.H."/>
            <person name="Takacs B."/>
            <person name="Keck W."/>
            <person name="Dijkstra B.W."/>
        </authorList>
    </citation>
    <scope>X-RAY CRYSTALLOGRAPHY (1.7 ANGSTROMS) OF 40-361</scope>
</reference>
<reference key="10">
    <citation type="journal article" date="2000" name="Biochemistry">
        <title>Crystallographic studies of the interactions of Escherichia coli lytic transglycosylase Slt35 with peptidoglycan.</title>
        <authorList>
            <person name="van Asselt E.J."/>
            <person name="Kalk K.H."/>
            <person name="Dijkstra B.W."/>
        </authorList>
    </citation>
    <scope>X-RAY CRYSTALLOGRAPHY (1.97 ANGSTROMS) OF 40-361</scope>
</reference>